<accession>P38739</accession>
<accession>D3DKU0</accession>
<reference key="1">
    <citation type="journal article" date="1994" name="Science">
        <title>Complete nucleotide sequence of Saccharomyces cerevisiae chromosome VIII.</title>
        <authorList>
            <person name="Johnston M."/>
            <person name="Andrews S."/>
            <person name="Brinkman R."/>
            <person name="Cooper J."/>
            <person name="Ding H."/>
            <person name="Dover J."/>
            <person name="Du Z."/>
            <person name="Favello A."/>
            <person name="Fulton L."/>
            <person name="Gattung S."/>
            <person name="Geisel C."/>
            <person name="Kirsten J."/>
            <person name="Kucaba T."/>
            <person name="Hillier L.W."/>
            <person name="Jier M."/>
            <person name="Johnston L."/>
            <person name="Langston Y."/>
            <person name="Latreille P."/>
            <person name="Louis E.J."/>
            <person name="Macri C."/>
            <person name="Mardis E."/>
            <person name="Menezes S."/>
            <person name="Mouser L."/>
            <person name="Nhan M."/>
            <person name="Rifkin L."/>
            <person name="Riles L."/>
            <person name="St Peter H."/>
            <person name="Trevaskis E."/>
            <person name="Vaughan K."/>
            <person name="Vignati D."/>
            <person name="Wilcox L."/>
            <person name="Wohldman P."/>
            <person name="Waterston R."/>
            <person name="Wilson R."/>
            <person name="Vaudin M."/>
        </authorList>
    </citation>
    <scope>NUCLEOTIDE SEQUENCE [LARGE SCALE GENOMIC DNA]</scope>
    <source>
        <strain>ATCC 204508 / S288c</strain>
    </source>
</reference>
<reference key="2">
    <citation type="journal article" date="2014" name="G3 (Bethesda)">
        <title>The reference genome sequence of Saccharomyces cerevisiae: Then and now.</title>
        <authorList>
            <person name="Engel S.R."/>
            <person name="Dietrich F.S."/>
            <person name="Fisk D.G."/>
            <person name="Binkley G."/>
            <person name="Balakrishnan R."/>
            <person name="Costanzo M.C."/>
            <person name="Dwight S.S."/>
            <person name="Hitz B.C."/>
            <person name="Karra K."/>
            <person name="Nash R.S."/>
            <person name="Weng S."/>
            <person name="Wong E.D."/>
            <person name="Lloyd P."/>
            <person name="Skrzypek M.S."/>
            <person name="Miyasato S.R."/>
            <person name="Simison M."/>
            <person name="Cherry J.M."/>
        </authorList>
    </citation>
    <scope>GENOME REANNOTATION</scope>
    <source>
        <strain>ATCC 204508 / S288c</strain>
    </source>
</reference>
<comment type="subcellular location">
    <subcellularLocation>
        <location evidence="4">Membrane</location>
        <topology evidence="4">Single-pass membrane protein</topology>
    </subcellularLocation>
</comment>
<feature type="signal peptide" evidence="1">
    <location>
        <begin position="1"/>
        <end position="26"/>
    </location>
</feature>
<feature type="chain" id="PRO_0000041486" description="Cell wall integrity and stress response component 4">
    <location>
        <begin position="27"/>
        <end position="605"/>
    </location>
</feature>
<feature type="transmembrane region" description="Helical" evidence="1">
    <location>
        <begin position="415"/>
        <end position="435"/>
    </location>
</feature>
<feature type="domain" description="WSC" evidence="2">
    <location>
        <begin position="27"/>
        <end position="110"/>
    </location>
</feature>
<feature type="region of interest" description="Disordered" evidence="3">
    <location>
        <begin position="151"/>
        <end position="305"/>
    </location>
</feature>
<feature type="region of interest" description="Disordered" evidence="3">
    <location>
        <begin position="381"/>
        <end position="404"/>
    </location>
</feature>
<feature type="region of interest" description="Disordered" evidence="3">
    <location>
        <begin position="494"/>
        <end position="521"/>
    </location>
</feature>
<feature type="compositionally biased region" description="Low complexity" evidence="3">
    <location>
        <begin position="381"/>
        <end position="399"/>
    </location>
</feature>
<feature type="compositionally biased region" description="Polar residues" evidence="3">
    <location>
        <begin position="497"/>
        <end position="521"/>
    </location>
</feature>
<feature type="glycosylation site" description="N-linked (GlcNAc...) asparagine" evidence="1">
    <location>
        <position position="340"/>
    </location>
</feature>
<feature type="glycosylation site" description="N-linked (GlcNAc...) asparagine" evidence="1">
    <location>
        <position position="386"/>
    </location>
</feature>
<feature type="glycosylation site" description="N-linked (GlcNAc...) asparagine" evidence="1">
    <location>
        <position position="389"/>
    </location>
</feature>
<feature type="glycosylation site" description="N-linked (GlcNAc...) asparagine" evidence="1">
    <location>
        <position position="398"/>
    </location>
</feature>
<feature type="glycosylation site" description="N-linked (GlcNAc...) asparagine" evidence="1">
    <location>
        <position position="479"/>
    </location>
</feature>
<feature type="glycosylation site" description="N-linked (GlcNAc...) asparagine" evidence="1">
    <location>
        <position position="553"/>
    </location>
</feature>
<feature type="glycosylation site" description="N-linked (GlcNAc...) asparagine" evidence="1">
    <location>
        <position position="583"/>
    </location>
</feature>
<gene>
    <name type="primary">WSC4</name>
    <name type="ordered locus">YHL028W</name>
</gene>
<sequence>MQTSMVSAKVSIWLVCSVICSSLVRATQSVCSSQNTATTDGVRNQFQSNGWCSNNCAGHQFAIVQGFMCWCSDSEPSTQTSVGDCSGTCPGYGYEDCGNADKDLFGYIYLGQTPLSSVQSVETSTESSVYVSSSSITSSSSTSIVDTTTISPTLTSTSTTPLTTASTSTTPSTDITSALPTTTSTKLSTSIPTSTTSSTSTTTSTSSSTSTTVSVTSSTSTTTSTTSSTLISTSTSSSSSSTPTTTSSAPISTSTTSSTSTSTSTTSPTSSSAPTSSSNTTPTSTTFTTTSPSTAPSSTTVTYTSTTASPITSTITSVNLQTSLKYSVITVTSVHTMDTNISEITSRYLTMKKVITQIYSSTLGATPTSAVATTSASVGGRITNNNNSNTTNSNTPTNKSTEKKGYWDSPGKIAATFVVVGVVCLVIICILIYLIHHYRTRPARKAQDFENEYQSKFYQSKYPNEVTTTTLHTPSPSSNSTFSTPRLIYTDEKGQIMSESPSPRQSTYSLTAGSPPNDPSTLASPFHDPILPRRTSTFLHSPIQKQHEKMESNVTLGEDTVLVDQRLDPSKMLNTLANDDATNHSTISLSDNVDYSRRVLRLMNE</sequence>
<organism>
    <name type="scientific">Saccharomyces cerevisiae (strain ATCC 204508 / S288c)</name>
    <name type="common">Baker's yeast</name>
    <dbReference type="NCBI Taxonomy" id="559292"/>
    <lineage>
        <taxon>Eukaryota</taxon>
        <taxon>Fungi</taxon>
        <taxon>Dikarya</taxon>
        <taxon>Ascomycota</taxon>
        <taxon>Saccharomycotina</taxon>
        <taxon>Saccharomycetes</taxon>
        <taxon>Saccharomycetales</taxon>
        <taxon>Saccharomycetaceae</taxon>
        <taxon>Saccharomyces</taxon>
    </lineage>
</organism>
<evidence type="ECO:0000255" key="1"/>
<evidence type="ECO:0000255" key="2">
    <source>
        <dbReference type="PROSITE-ProRule" id="PRU00558"/>
    </source>
</evidence>
<evidence type="ECO:0000256" key="3">
    <source>
        <dbReference type="SAM" id="MobiDB-lite"/>
    </source>
</evidence>
<evidence type="ECO:0000305" key="4"/>
<proteinExistence type="inferred from homology"/>
<keyword id="KW-0961">Cell wall biogenesis/degradation</keyword>
<keyword id="KW-0325">Glycoprotein</keyword>
<keyword id="KW-0472">Membrane</keyword>
<keyword id="KW-1185">Reference proteome</keyword>
<keyword id="KW-0732">Signal</keyword>
<keyword id="KW-0812">Transmembrane</keyword>
<keyword id="KW-1133">Transmembrane helix</keyword>
<protein>
    <recommendedName>
        <fullName>Cell wall integrity and stress response component 4</fullName>
    </recommendedName>
</protein>
<dbReference type="EMBL" id="U11583">
    <property type="protein sequence ID" value="AAB65040.1"/>
    <property type="molecule type" value="Genomic_DNA"/>
</dbReference>
<dbReference type="EMBL" id="BK006934">
    <property type="protein sequence ID" value="DAA06657.1"/>
    <property type="molecule type" value="Genomic_DNA"/>
</dbReference>
<dbReference type="PIR" id="S48940">
    <property type="entry name" value="S48940"/>
</dbReference>
<dbReference type="RefSeq" id="NP_011835.1">
    <property type="nucleotide sequence ID" value="NM_001179108.1"/>
</dbReference>
<dbReference type="SMR" id="P38739"/>
<dbReference type="BioGRID" id="36394">
    <property type="interactions" value="37"/>
</dbReference>
<dbReference type="FunCoup" id="P38739">
    <property type="interactions" value="92"/>
</dbReference>
<dbReference type="IntAct" id="P38739">
    <property type="interactions" value="3"/>
</dbReference>
<dbReference type="STRING" id="4932.YHL028W"/>
<dbReference type="GlyCosmos" id="P38739">
    <property type="glycosylation" value="7 sites, No reported glycans"/>
</dbReference>
<dbReference type="GlyGen" id="P38739">
    <property type="glycosylation" value="8 sites"/>
</dbReference>
<dbReference type="iPTMnet" id="P38739"/>
<dbReference type="PaxDb" id="4932-YHL028W"/>
<dbReference type="PeptideAtlas" id="P38739"/>
<dbReference type="EnsemblFungi" id="YHL028W_mRNA">
    <property type="protein sequence ID" value="YHL028W"/>
    <property type="gene ID" value="YHL028W"/>
</dbReference>
<dbReference type="GeneID" id="856357"/>
<dbReference type="KEGG" id="sce:YHL028W"/>
<dbReference type="AGR" id="SGD:S000001020"/>
<dbReference type="SGD" id="S000001020">
    <property type="gene designation" value="WSC4"/>
</dbReference>
<dbReference type="VEuPathDB" id="FungiDB:YHL028W"/>
<dbReference type="eggNOG" id="KOG4157">
    <property type="taxonomic scope" value="Eukaryota"/>
</dbReference>
<dbReference type="HOGENOM" id="CLU_024893_2_1_1"/>
<dbReference type="InParanoid" id="P38739"/>
<dbReference type="OMA" id="CPGYKDQ"/>
<dbReference type="OrthoDB" id="2537459at2759"/>
<dbReference type="BioCyc" id="YEAST:G3O-31048-MONOMER"/>
<dbReference type="BioGRID-ORCS" id="856357">
    <property type="hits" value="6 hits in 10 CRISPR screens"/>
</dbReference>
<dbReference type="PRO" id="PR:P38739"/>
<dbReference type="Proteomes" id="UP000002311">
    <property type="component" value="Chromosome VIII"/>
</dbReference>
<dbReference type="RNAct" id="P38739">
    <property type="molecule type" value="protein"/>
</dbReference>
<dbReference type="GO" id="GO:0005789">
    <property type="term" value="C:endoplasmic reticulum membrane"/>
    <property type="evidence" value="ECO:0000314"/>
    <property type="project" value="SGD"/>
</dbReference>
<dbReference type="GO" id="GO:0008320">
    <property type="term" value="F:protein transmembrane transporter activity"/>
    <property type="evidence" value="ECO:0000315"/>
    <property type="project" value="SGD"/>
</dbReference>
<dbReference type="GO" id="GO:0071555">
    <property type="term" value="P:cell wall organization"/>
    <property type="evidence" value="ECO:0007669"/>
    <property type="project" value="UniProtKB-KW"/>
</dbReference>
<dbReference type="GO" id="GO:0045047">
    <property type="term" value="P:protein targeting to ER"/>
    <property type="evidence" value="ECO:0000315"/>
    <property type="project" value="SGD"/>
</dbReference>
<dbReference type="GO" id="GO:0006612">
    <property type="term" value="P:protein targeting to membrane"/>
    <property type="evidence" value="ECO:0000315"/>
    <property type="project" value="SGD"/>
</dbReference>
<dbReference type="GO" id="GO:0009408">
    <property type="term" value="P:response to heat"/>
    <property type="evidence" value="ECO:0000316"/>
    <property type="project" value="SGD"/>
</dbReference>
<dbReference type="InterPro" id="IPR002889">
    <property type="entry name" value="WSC_carb-bd"/>
</dbReference>
<dbReference type="SMART" id="SM00321">
    <property type="entry name" value="WSC"/>
    <property type="match status" value="1"/>
</dbReference>
<dbReference type="PROSITE" id="PS51212">
    <property type="entry name" value="WSC"/>
    <property type="match status" value="1"/>
</dbReference>
<name>WSC4_YEAST</name>